<accession>Q6GLZ8</accession>
<reference key="1">
    <citation type="submission" date="2004-06" db="EMBL/GenBank/DDBJ databases">
        <authorList>
            <consortium name="NIH - Xenopus Gene Collection (XGC) project"/>
        </authorList>
    </citation>
    <scope>NUCLEOTIDE SEQUENCE [LARGE SCALE MRNA]</scope>
    <source>
        <tissue>Eye</tissue>
    </source>
</reference>
<comment type="function">
    <text evidence="1">May play a role in mRNA splicing.</text>
</comment>
<comment type="subunit">
    <text evidence="1">Part of a tri-snRNP complex.</text>
</comment>
<comment type="subcellular location">
    <subcellularLocation>
        <location evidence="3">Nucleus</location>
    </subcellularLocation>
</comment>
<comment type="similarity">
    <text evidence="3">Belongs to the SNUT3 family.</text>
</comment>
<sequence>MGRSRSRSPERRRERRRSRSASRERERRRRERSRSRERRRSRSRSPHRRRSRSPRRHRSSSISPSRLKDRRDDDKKEPKESKGGGSKERQLAAEDLEGKTEEEIEMMKLMGFASFDSSKGKKTDGSVNAYAINVSQKRKYRQYMNRKGGFNRPLDFVA</sequence>
<dbReference type="EMBL" id="BC074295">
    <property type="protein sequence ID" value="AAH74295.1"/>
    <property type="molecule type" value="mRNA"/>
</dbReference>
<dbReference type="RefSeq" id="NP_001086180.1">
    <property type="nucleotide sequence ID" value="NM_001092711.1"/>
</dbReference>
<dbReference type="SMR" id="Q6GLZ8"/>
<dbReference type="DNASU" id="444609"/>
<dbReference type="GeneID" id="444609"/>
<dbReference type="KEGG" id="xla:444609"/>
<dbReference type="AGR" id="Xenbase:XB-GENE-6254617"/>
<dbReference type="CTD" id="444609"/>
<dbReference type="Xenbase" id="XB-GENE-6254617">
    <property type="gene designation" value="snrnp27.S"/>
</dbReference>
<dbReference type="OMA" id="VDSSTMW"/>
<dbReference type="OrthoDB" id="21368at2759"/>
<dbReference type="Proteomes" id="UP000186698">
    <property type="component" value="Chromosome 3S"/>
</dbReference>
<dbReference type="Bgee" id="444609">
    <property type="expression patterns" value="Expressed in egg cell and 19 other cell types or tissues"/>
</dbReference>
<dbReference type="GO" id="GO:0071011">
    <property type="term" value="C:precatalytic spliceosome"/>
    <property type="evidence" value="ECO:0007669"/>
    <property type="project" value="TreeGrafter"/>
</dbReference>
<dbReference type="GO" id="GO:0006397">
    <property type="term" value="P:mRNA processing"/>
    <property type="evidence" value="ECO:0007669"/>
    <property type="project" value="UniProtKB-KW"/>
</dbReference>
<dbReference type="GO" id="GO:0008380">
    <property type="term" value="P:RNA splicing"/>
    <property type="evidence" value="ECO:0007669"/>
    <property type="project" value="UniProtKB-KW"/>
</dbReference>
<dbReference type="InterPro" id="IPR013957">
    <property type="entry name" value="SNRNP27"/>
</dbReference>
<dbReference type="PANTHER" id="PTHR31077">
    <property type="entry name" value="U4/U6.U5 SMALL NUCLEAR RIBONUCLEOPROTEIN 27 KDA PROTEIN"/>
    <property type="match status" value="1"/>
</dbReference>
<dbReference type="PANTHER" id="PTHR31077:SF1">
    <property type="entry name" value="U4_U6.U5 SMALL NUCLEAR RIBONUCLEOPROTEIN 27 KDA PROTEIN"/>
    <property type="match status" value="1"/>
</dbReference>
<dbReference type="Pfam" id="PF08648">
    <property type="entry name" value="SNRNP27"/>
    <property type="match status" value="1"/>
</dbReference>
<gene>
    <name type="primary">snrnp27</name>
</gene>
<organism>
    <name type="scientific">Xenopus laevis</name>
    <name type="common">African clawed frog</name>
    <dbReference type="NCBI Taxonomy" id="8355"/>
    <lineage>
        <taxon>Eukaryota</taxon>
        <taxon>Metazoa</taxon>
        <taxon>Chordata</taxon>
        <taxon>Craniata</taxon>
        <taxon>Vertebrata</taxon>
        <taxon>Euteleostomi</taxon>
        <taxon>Amphibia</taxon>
        <taxon>Batrachia</taxon>
        <taxon>Anura</taxon>
        <taxon>Pipoidea</taxon>
        <taxon>Pipidae</taxon>
        <taxon>Xenopodinae</taxon>
        <taxon>Xenopus</taxon>
        <taxon>Xenopus</taxon>
    </lineage>
</organism>
<proteinExistence type="evidence at transcript level"/>
<protein>
    <recommendedName>
        <fullName>U4/U6.U5 small nuclear ribonucleoprotein 27 kDa protein</fullName>
        <shortName>U4/U6.U5 snRNP 27 kDa protein</shortName>
        <shortName>U4/U6.U5-27K</shortName>
    </recommendedName>
    <alternativeName>
        <fullName>U4/U6.U5 tri-snRNP-associated protein 3</fullName>
    </alternativeName>
</protein>
<name>SNR27_XENLA</name>
<evidence type="ECO:0000250" key="1"/>
<evidence type="ECO:0000256" key="2">
    <source>
        <dbReference type="SAM" id="MobiDB-lite"/>
    </source>
</evidence>
<evidence type="ECO:0000305" key="3"/>
<keyword id="KW-0507">mRNA processing</keyword>
<keyword id="KW-0508">mRNA splicing</keyword>
<keyword id="KW-0539">Nucleus</keyword>
<keyword id="KW-1185">Reference proteome</keyword>
<feature type="chain" id="PRO_0000223968" description="U4/U6.U5 small nuclear ribonucleoprotein 27 kDa protein">
    <location>
        <begin position="1"/>
        <end position="158"/>
    </location>
</feature>
<feature type="region of interest" description="Disordered" evidence="2">
    <location>
        <begin position="1"/>
        <end position="102"/>
    </location>
</feature>
<feature type="compositionally biased region" description="Basic residues" evidence="2">
    <location>
        <begin position="13"/>
        <end position="59"/>
    </location>
</feature>
<feature type="compositionally biased region" description="Basic and acidic residues" evidence="2">
    <location>
        <begin position="66"/>
        <end position="101"/>
    </location>
</feature>